<feature type="chain" id="PRO_1000114215" description="Cell division topological specificity factor">
    <location>
        <begin position="1"/>
        <end position="84"/>
    </location>
</feature>
<accession>B2AG17</accession>
<protein>
    <recommendedName>
        <fullName evidence="1">Cell division topological specificity factor</fullName>
    </recommendedName>
</protein>
<organism>
    <name type="scientific">Cupriavidus taiwanensis (strain DSM 17343 / BCRC 17206 / CCUG 44338 / CIP 107171 / LMG 19424 / R1)</name>
    <name type="common">Ralstonia taiwanensis (strain LMG 19424)</name>
    <dbReference type="NCBI Taxonomy" id="977880"/>
    <lineage>
        <taxon>Bacteria</taxon>
        <taxon>Pseudomonadati</taxon>
        <taxon>Pseudomonadota</taxon>
        <taxon>Betaproteobacteria</taxon>
        <taxon>Burkholderiales</taxon>
        <taxon>Burkholderiaceae</taxon>
        <taxon>Cupriavidus</taxon>
    </lineage>
</organism>
<proteinExistence type="inferred from homology"/>
<evidence type="ECO:0000255" key="1">
    <source>
        <dbReference type="HAMAP-Rule" id="MF_00262"/>
    </source>
</evidence>
<name>MINE_CUPTR</name>
<sequence length="84" mass="9475">MSILSFLLGEKKKSASVAKERLQIILAHERTGHSAPADYLPALQRELVAVISKYVKIGDQDLRVSLERQDNLEVLEVKIEIPQH</sequence>
<gene>
    <name evidence="1" type="primary">minE</name>
    <name type="ordered locus">RALTA_A0043</name>
</gene>
<comment type="function">
    <text evidence="1">Prevents the cell division inhibition by proteins MinC and MinD at internal division sites while permitting inhibition at polar sites. This ensures cell division at the proper site by restricting the formation of a division septum at the midpoint of the long axis of the cell.</text>
</comment>
<comment type="similarity">
    <text evidence="1">Belongs to the MinE family.</text>
</comment>
<reference key="1">
    <citation type="journal article" date="2008" name="Genome Res.">
        <title>Genome sequence of the beta-rhizobium Cupriavidus taiwanensis and comparative genomics of rhizobia.</title>
        <authorList>
            <person name="Amadou C."/>
            <person name="Pascal G."/>
            <person name="Mangenot S."/>
            <person name="Glew M."/>
            <person name="Bontemps C."/>
            <person name="Capela D."/>
            <person name="Carrere S."/>
            <person name="Cruveiller S."/>
            <person name="Dossat C."/>
            <person name="Lajus A."/>
            <person name="Marchetti M."/>
            <person name="Poinsot V."/>
            <person name="Rouy Z."/>
            <person name="Servin B."/>
            <person name="Saad M."/>
            <person name="Schenowitz C."/>
            <person name="Barbe V."/>
            <person name="Batut J."/>
            <person name="Medigue C."/>
            <person name="Masson-Boivin C."/>
        </authorList>
    </citation>
    <scope>NUCLEOTIDE SEQUENCE [LARGE SCALE GENOMIC DNA]</scope>
    <source>
        <strain>DSM 17343 / BCRC 17206 / CCUG 44338 / CIP 107171 / LMG 19424 / R1</strain>
    </source>
</reference>
<dbReference type="EMBL" id="CU633749">
    <property type="protein sequence ID" value="CAP62716.1"/>
    <property type="molecule type" value="Genomic_DNA"/>
</dbReference>
<dbReference type="RefSeq" id="WP_012351386.1">
    <property type="nucleotide sequence ID" value="NC_010528.1"/>
</dbReference>
<dbReference type="SMR" id="B2AG17"/>
<dbReference type="GeneID" id="29760664"/>
<dbReference type="KEGG" id="cti:RALTA_A0043"/>
<dbReference type="eggNOG" id="COG0851">
    <property type="taxonomic scope" value="Bacteria"/>
</dbReference>
<dbReference type="HOGENOM" id="CLU_137929_2_1_4"/>
<dbReference type="BioCyc" id="CTAI977880:RALTA_RS00215-MONOMER"/>
<dbReference type="Proteomes" id="UP000001692">
    <property type="component" value="Chromosome 1"/>
</dbReference>
<dbReference type="GO" id="GO:0051301">
    <property type="term" value="P:cell division"/>
    <property type="evidence" value="ECO:0007669"/>
    <property type="project" value="UniProtKB-KW"/>
</dbReference>
<dbReference type="GO" id="GO:0032955">
    <property type="term" value="P:regulation of division septum assembly"/>
    <property type="evidence" value="ECO:0007669"/>
    <property type="project" value="InterPro"/>
</dbReference>
<dbReference type="FunFam" id="3.30.1070.10:FF:000001">
    <property type="entry name" value="Cell division topological specificity factor"/>
    <property type="match status" value="1"/>
</dbReference>
<dbReference type="Gene3D" id="3.30.1070.10">
    <property type="entry name" value="Cell division topological specificity factor MinE"/>
    <property type="match status" value="1"/>
</dbReference>
<dbReference type="HAMAP" id="MF_00262">
    <property type="entry name" value="MinE"/>
    <property type="match status" value="1"/>
</dbReference>
<dbReference type="InterPro" id="IPR005527">
    <property type="entry name" value="MinE"/>
</dbReference>
<dbReference type="InterPro" id="IPR036707">
    <property type="entry name" value="MinE_sf"/>
</dbReference>
<dbReference type="NCBIfam" id="TIGR01215">
    <property type="entry name" value="minE"/>
    <property type="match status" value="1"/>
</dbReference>
<dbReference type="NCBIfam" id="NF001422">
    <property type="entry name" value="PRK00296.1"/>
    <property type="match status" value="1"/>
</dbReference>
<dbReference type="NCBIfam" id="NF010595">
    <property type="entry name" value="PRK13989.1"/>
    <property type="match status" value="1"/>
</dbReference>
<dbReference type="Pfam" id="PF03776">
    <property type="entry name" value="MinE"/>
    <property type="match status" value="1"/>
</dbReference>
<dbReference type="SUPFAM" id="SSF55229">
    <property type="entry name" value="Cell division protein MinE topological specificity domain"/>
    <property type="match status" value="1"/>
</dbReference>
<keyword id="KW-0131">Cell cycle</keyword>
<keyword id="KW-0132">Cell division</keyword>